<organism>
    <name type="scientific">Caenorhabditis elegans</name>
    <dbReference type="NCBI Taxonomy" id="6239"/>
    <lineage>
        <taxon>Eukaryota</taxon>
        <taxon>Metazoa</taxon>
        <taxon>Ecdysozoa</taxon>
        <taxon>Nematoda</taxon>
        <taxon>Chromadorea</taxon>
        <taxon>Rhabditida</taxon>
        <taxon>Rhabditina</taxon>
        <taxon>Rhabditomorpha</taxon>
        <taxon>Rhabditoidea</taxon>
        <taxon>Rhabditidae</taxon>
        <taxon>Peloderinae</taxon>
        <taxon>Caenorhabditis</taxon>
    </lineage>
</organism>
<protein>
    <recommendedName>
        <fullName evidence="1">Eukaryotic translation initiation factor 3 subunit K</fullName>
        <shortName evidence="1">eIF3k</shortName>
    </recommendedName>
    <alternativeName>
        <fullName evidence="1">eIF-3 p25</fullName>
    </alternativeName>
</protein>
<feature type="chain" id="PRO_0000123549" description="Eukaryotic translation initiation factor 3 subunit K">
    <location>
        <begin position="1"/>
        <end position="240"/>
    </location>
</feature>
<feature type="domain" description="PCI" evidence="2">
    <location>
        <begin position="41"/>
        <end position="221"/>
    </location>
</feature>
<keyword id="KW-0963">Cytoplasm</keyword>
<keyword id="KW-0396">Initiation factor</keyword>
<keyword id="KW-0648">Protein biosynthesis</keyword>
<keyword id="KW-1185">Reference proteome</keyword>
<gene>
    <name evidence="1" type="primary">eif-3.K</name>
    <name type="ORF">pgn-69</name>
    <name type="ORF">T16G1.11</name>
</gene>
<dbReference type="EMBL" id="AY731377">
    <property type="protein sequence ID" value="AAW63419.1"/>
    <property type="molecule type" value="mRNA"/>
</dbReference>
<dbReference type="EMBL" id="Z81592">
    <property type="protein sequence ID" value="CAB04732.1"/>
    <property type="molecule type" value="Genomic_DNA"/>
</dbReference>
<dbReference type="PIR" id="T24957">
    <property type="entry name" value="T24957"/>
</dbReference>
<dbReference type="RefSeq" id="NP_506241.1">
    <property type="nucleotide sequence ID" value="NM_073840.8"/>
</dbReference>
<dbReference type="SMR" id="Q9XUP3"/>
<dbReference type="BioGRID" id="44798">
    <property type="interactions" value="19"/>
</dbReference>
<dbReference type="DIP" id="DIP-26400N"/>
<dbReference type="FunCoup" id="Q9XUP3">
    <property type="interactions" value="2391"/>
</dbReference>
<dbReference type="IntAct" id="Q9XUP3">
    <property type="interactions" value="2"/>
</dbReference>
<dbReference type="STRING" id="6239.T16G1.11.1"/>
<dbReference type="PaxDb" id="6239-T16G1.11"/>
<dbReference type="PeptideAtlas" id="Q9XUP3"/>
<dbReference type="EnsemblMetazoa" id="T16G1.11.1">
    <property type="protein sequence ID" value="T16G1.11.1"/>
    <property type="gene ID" value="WBGene00001233"/>
</dbReference>
<dbReference type="GeneID" id="179779"/>
<dbReference type="KEGG" id="cel:CELE_T16G1.11"/>
<dbReference type="UCSC" id="T16G1.11">
    <property type="organism name" value="c. elegans"/>
</dbReference>
<dbReference type="AGR" id="WB:WBGene00001233"/>
<dbReference type="CTD" id="179779"/>
<dbReference type="WormBase" id="T16G1.11">
    <property type="protein sequence ID" value="CE20081"/>
    <property type="gene ID" value="WBGene00001233"/>
    <property type="gene designation" value="eif-3.K"/>
</dbReference>
<dbReference type="eggNOG" id="KOG3252">
    <property type="taxonomic scope" value="Eukaryota"/>
</dbReference>
<dbReference type="GeneTree" id="ENSGT00390000009409"/>
<dbReference type="HOGENOM" id="CLU_076723_1_0_1"/>
<dbReference type="InParanoid" id="Q9XUP3"/>
<dbReference type="OMA" id="GDDLCAD"/>
<dbReference type="OrthoDB" id="337745at2759"/>
<dbReference type="PhylomeDB" id="Q9XUP3"/>
<dbReference type="Reactome" id="R-CEL-156827">
    <property type="pathway name" value="L13a-mediated translational silencing of Ceruloplasmin expression"/>
</dbReference>
<dbReference type="Reactome" id="R-CEL-72649">
    <property type="pathway name" value="Translation initiation complex formation"/>
</dbReference>
<dbReference type="Reactome" id="R-CEL-72689">
    <property type="pathway name" value="Formation of a pool of free 40S subunits"/>
</dbReference>
<dbReference type="Reactome" id="R-CEL-72695">
    <property type="pathway name" value="Formation of the ternary complex, and subsequently, the 43S complex"/>
</dbReference>
<dbReference type="Reactome" id="R-CEL-72702">
    <property type="pathway name" value="Ribosomal scanning and start codon recognition"/>
</dbReference>
<dbReference type="PRO" id="PR:Q9XUP3"/>
<dbReference type="Proteomes" id="UP000001940">
    <property type="component" value="Chromosome V"/>
</dbReference>
<dbReference type="Bgee" id="WBGene00001233">
    <property type="expression patterns" value="Expressed in pharyngeal muscle cell (C elegans) and 4 other cell types or tissues"/>
</dbReference>
<dbReference type="GO" id="GO:0005737">
    <property type="term" value="C:cytoplasm"/>
    <property type="evidence" value="ECO:0000314"/>
    <property type="project" value="WormBase"/>
</dbReference>
<dbReference type="GO" id="GO:0016282">
    <property type="term" value="C:eukaryotic 43S preinitiation complex"/>
    <property type="evidence" value="ECO:0007669"/>
    <property type="project" value="UniProtKB-UniRule"/>
</dbReference>
<dbReference type="GO" id="GO:0033290">
    <property type="term" value="C:eukaryotic 48S preinitiation complex"/>
    <property type="evidence" value="ECO:0007669"/>
    <property type="project" value="UniProtKB-UniRule"/>
</dbReference>
<dbReference type="GO" id="GO:0005852">
    <property type="term" value="C:eukaryotic translation initiation factor 3 complex"/>
    <property type="evidence" value="ECO:0000250"/>
    <property type="project" value="WormBase"/>
</dbReference>
<dbReference type="GO" id="GO:0043022">
    <property type="term" value="F:ribosome binding"/>
    <property type="evidence" value="ECO:0007669"/>
    <property type="project" value="InterPro"/>
</dbReference>
<dbReference type="GO" id="GO:0003723">
    <property type="term" value="F:RNA binding"/>
    <property type="evidence" value="ECO:0007669"/>
    <property type="project" value="UniProtKB-UniRule"/>
</dbReference>
<dbReference type="GO" id="GO:0003743">
    <property type="term" value="F:translation initiation factor activity"/>
    <property type="evidence" value="ECO:0007669"/>
    <property type="project" value="UniProtKB-UniRule"/>
</dbReference>
<dbReference type="GO" id="GO:0001732">
    <property type="term" value="P:formation of cytoplasmic translation initiation complex"/>
    <property type="evidence" value="ECO:0007669"/>
    <property type="project" value="UniProtKB-UniRule"/>
</dbReference>
<dbReference type="GO" id="GO:0043065">
    <property type="term" value="P:positive regulation of apoptotic process"/>
    <property type="evidence" value="ECO:0000315"/>
    <property type="project" value="WormBase"/>
</dbReference>
<dbReference type="GO" id="GO:0006446">
    <property type="term" value="P:regulation of translational initiation"/>
    <property type="evidence" value="ECO:0007669"/>
    <property type="project" value="InterPro"/>
</dbReference>
<dbReference type="GO" id="GO:0006413">
    <property type="term" value="P:translational initiation"/>
    <property type="evidence" value="ECO:0000250"/>
    <property type="project" value="WormBase"/>
</dbReference>
<dbReference type="FunFam" id="1.10.10.10:FF:000212">
    <property type="entry name" value="Eukaryotic translation initiation factor 3 subunit K"/>
    <property type="match status" value="1"/>
</dbReference>
<dbReference type="FunFam" id="1.25.40.250:FF:000008">
    <property type="entry name" value="Eukaryotic translation initiation factor 3 subunit K"/>
    <property type="match status" value="1"/>
</dbReference>
<dbReference type="Gene3D" id="1.25.40.250">
    <property type="entry name" value="ARM repeat, domain 1"/>
    <property type="match status" value="1"/>
</dbReference>
<dbReference type="Gene3D" id="1.10.10.10">
    <property type="entry name" value="Winged helix-like DNA-binding domain superfamily/Winged helix DNA-binding domain"/>
    <property type="match status" value="1"/>
</dbReference>
<dbReference type="HAMAP" id="MF_03010">
    <property type="entry name" value="eIF3k"/>
    <property type="match status" value="1"/>
</dbReference>
<dbReference type="InterPro" id="IPR016024">
    <property type="entry name" value="ARM-type_fold"/>
</dbReference>
<dbReference type="InterPro" id="IPR033464">
    <property type="entry name" value="CSN8_PSD8_EIF3K"/>
</dbReference>
<dbReference type="InterPro" id="IPR009374">
    <property type="entry name" value="eIF3k"/>
</dbReference>
<dbReference type="InterPro" id="IPR000717">
    <property type="entry name" value="PCI_dom"/>
</dbReference>
<dbReference type="InterPro" id="IPR016020">
    <property type="entry name" value="Transl_init_fac_sub12_N_euk"/>
</dbReference>
<dbReference type="InterPro" id="IPR036388">
    <property type="entry name" value="WH-like_DNA-bd_sf"/>
</dbReference>
<dbReference type="InterPro" id="IPR036390">
    <property type="entry name" value="WH_DNA-bd_sf"/>
</dbReference>
<dbReference type="PANTHER" id="PTHR13022">
    <property type="entry name" value="EUKARYOTIC TRANSLATION INITIATION FACTOR 3 SUBUNIT 11"/>
    <property type="match status" value="1"/>
</dbReference>
<dbReference type="PANTHER" id="PTHR13022:SF0">
    <property type="entry name" value="EUKARYOTIC TRANSLATION INITIATION FACTOR 3 SUBUNIT K"/>
    <property type="match status" value="1"/>
</dbReference>
<dbReference type="Pfam" id="PF10075">
    <property type="entry name" value="CSN8_PSD8_EIF3K"/>
    <property type="match status" value="2"/>
</dbReference>
<dbReference type="SUPFAM" id="SSF48371">
    <property type="entry name" value="ARM repeat"/>
    <property type="match status" value="1"/>
</dbReference>
<dbReference type="SUPFAM" id="SSF46785">
    <property type="entry name" value="Winged helix' DNA-binding domain"/>
    <property type="match status" value="1"/>
</dbReference>
<dbReference type="PROSITE" id="PS50250">
    <property type="entry name" value="PCI"/>
    <property type="match status" value="1"/>
</dbReference>
<accession>Q9XUP3</accession>
<accession>Q0VI97</accession>
<sequence length="240" mass="27031">MSFEKLQKELHEAIEGVNRYNPENVADLAACVQAMVNENKYDKDIVLTILKLYQLNPEKYDEAVVRQVLLKTLMVLPSSDFALAKCLIDTNRLGSQELRRIFDLGAVLESCNFAVFWKLVKGAYKPTTNPNEPFKVPGEVPKMIKPMVGFEDAVKHYACRVISVTFQKIEKKMLSRLLGGASDKEVTALAQSFGWEAKENGDVFFVANHEGTIKTRNIDEKIQFPHVADLLTSIQPPLTL</sequence>
<proteinExistence type="evidence at transcript level"/>
<name>EIF3K_CAEEL</name>
<comment type="function">
    <text evidence="1">Component of the eukaryotic translation initiation factor 3 (eIF-3) complex, which is involved in protein synthesis of a specialized repertoire of mRNAs and, together with other initiation factors, stimulates binding of mRNA and methionyl-tRNAi to the 40S ribosome. The eIF-3 complex specifically targets and initiates translation of a subset of mRNAs involved in cell proliferation.</text>
</comment>
<comment type="subunit">
    <text evidence="1">Component of the eukaryotic translation initiation factor 3 (eIF-3) complex.</text>
</comment>
<comment type="subcellular location">
    <subcellularLocation>
        <location evidence="1">Cytoplasm</location>
    </subcellularLocation>
</comment>
<comment type="similarity">
    <text evidence="1">Belongs to the eIF-3 subunit K family.</text>
</comment>
<reference key="1">
    <citation type="submission" date="2004-08" db="EMBL/GenBank/DDBJ databases">
        <title>Molecular characterization of eIF-3.K in Caenorhabditis elegans.</title>
        <authorList>
            <person name="Chen J.-Y."/>
            <person name="Chen R.-H."/>
            <person name="Wu Y.-C."/>
        </authorList>
    </citation>
    <scope>NUCLEOTIDE SEQUENCE [MRNA]</scope>
</reference>
<reference key="2">
    <citation type="journal article" date="1998" name="Science">
        <title>Genome sequence of the nematode C. elegans: a platform for investigating biology.</title>
        <authorList>
            <consortium name="The C. elegans sequencing consortium"/>
        </authorList>
    </citation>
    <scope>NUCLEOTIDE SEQUENCE [LARGE SCALE GENOMIC DNA]</scope>
    <source>
        <strain>Bristol N2</strain>
    </source>
</reference>
<evidence type="ECO:0000255" key="1">
    <source>
        <dbReference type="HAMAP-Rule" id="MF_03010"/>
    </source>
</evidence>
<evidence type="ECO:0000255" key="2">
    <source>
        <dbReference type="PROSITE-ProRule" id="PRU01185"/>
    </source>
</evidence>